<protein>
    <recommendedName>
        <fullName evidence="1">Ribosomal RNA large subunit methyltransferase F</fullName>
        <ecNumber evidence="1">2.1.1.181</ecNumber>
    </recommendedName>
    <alternativeName>
        <fullName evidence="1">23S rRNA mA1618 methyltransferase</fullName>
    </alternativeName>
    <alternativeName>
        <fullName evidence="1">rRNA adenine N-6-methyltransferase</fullName>
    </alternativeName>
</protein>
<accession>B1JH95</accession>
<sequence>MLSYAPENAYQRASTMENKKVFPKEKSGLHPRNRHRSRYDFDALSVSCPELIPFLAPTAYGDISVDFADPLAVKMLNKALLKHFYGIEYWDIPADSLCPPIPGRADYVHHLADLLASCNGEVIPKGKNIALLDIGVGANCIYPIIGQREYGWRFTGTDIDSHALSAAKMVVSMNPTLKNTLRLKQQKDPHAIFEGVWAVNERYDATLCNPPFHGSAEEAAATTRRKLHKLGKNEVAAKPVQNFGGKNSELWCEGGEEGFVSRMVAESVAKAQNCFWFTSLISKKTTLPAIYHALRYVKAVEVRTIEMAQGQKVSRFVAWTFLTPEQQAAWVAERWA</sequence>
<proteinExistence type="inferred from homology"/>
<dbReference type="EC" id="2.1.1.181" evidence="1"/>
<dbReference type="EMBL" id="CP000950">
    <property type="protein sequence ID" value="ACA67889.1"/>
    <property type="status" value="ALT_INIT"/>
    <property type="molecule type" value="Genomic_DNA"/>
</dbReference>
<dbReference type="SMR" id="B1JH95"/>
<dbReference type="KEGG" id="ypy:YPK_1596"/>
<dbReference type="GO" id="GO:0005737">
    <property type="term" value="C:cytoplasm"/>
    <property type="evidence" value="ECO:0007669"/>
    <property type="project" value="UniProtKB-SubCell"/>
</dbReference>
<dbReference type="GO" id="GO:0052907">
    <property type="term" value="F:23S rRNA (adenine(1618)-N(6))-methyltransferase activity"/>
    <property type="evidence" value="ECO:0007669"/>
    <property type="project" value="UniProtKB-EC"/>
</dbReference>
<dbReference type="GO" id="GO:0070475">
    <property type="term" value="P:rRNA base methylation"/>
    <property type="evidence" value="ECO:0007669"/>
    <property type="project" value="TreeGrafter"/>
</dbReference>
<dbReference type="CDD" id="cd02440">
    <property type="entry name" value="AdoMet_MTases"/>
    <property type="match status" value="1"/>
</dbReference>
<dbReference type="FunFam" id="3.40.50.150:FF:000045">
    <property type="entry name" value="Ribosomal RNA large subunit methyltransferase F"/>
    <property type="match status" value="1"/>
</dbReference>
<dbReference type="Gene3D" id="3.40.50.150">
    <property type="entry name" value="Vaccinia Virus protein VP39"/>
    <property type="match status" value="1"/>
</dbReference>
<dbReference type="HAMAP" id="MF_01848">
    <property type="entry name" value="23SrRNA_methyltr_F"/>
    <property type="match status" value="1"/>
</dbReference>
<dbReference type="InterPro" id="IPR010286">
    <property type="entry name" value="METTL16/RlmF"/>
</dbReference>
<dbReference type="InterPro" id="IPR016909">
    <property type="entry name" value="rRNA_lsu_MeTfrase_F"/>
</dbReference>
<dbReference type="InterPro" id="IPR029063">
    <property type="entry name" value="SAM-dependent_MTases_sf"/>
</dbReference>
<dbReference type="NCBIfam" id="NF008725">
    <property type="entry name" value="PRK11727.1"/>
    <property type="match status" value="1"/>
</dbReference>
<dbReference type="PANTHER" id="PTHR13393:SF0">
    <property type="entry name" value="RNA N6-ADENOSINE-METHYLTRANSFERASE METTL16"/>
    <property type="match status" value="1"/>
</dbReference>
<dbReference type="PANTHER" id="PTHR13393">
    <property type="entry name" value="SAM-DEPENDENT METHYLTRANSFERASE"/>
    <property type="match status" value="1"/>
</dbReference>
<dbReference type="Pfam" id="PF05971">
    <property type="entry name" value="Methyltransf_10"/>
    <property type="match status" value="1"/>
</dbReference>
<dbReference type="PIRSF" id="PIRSF029038">
    <property type="entry name" value="Mtase_YbiN_prd"/>
    <property type="match status" value="1"/>
</dbReference>
<dbReference type="SUPFAM" id="SSF53335">
    <property type="entry name" value="S-adenosyl-L-methionine-dependent methyltransferases"/>
    <property type="match status" value="1"/>
</dbReference>
<organism>
    <name type="scientific">Yersinia pseudotuberculosis serotype O:3 (strain YPIII)</name>
    <dbReference type="NCBI Taxonomy" id="502800"/>
    <lineage>
        <taxon>Bacteria</taxon>
        <taxon>Pseudomonadati</taxon>
        <taxon>Pseudomonadota</taxon>
        <taxon>Gammaproteobacteria</taxon>
        <taxon>Enterobacterales</taxon>
        <taxon>Yersiniaceae</taxon>
        <taxon>Yersinia</taxon>
    </lineage>
</organism>
<name>RLMF_YERPY</name>
<gene>
    <name evidence="1" type="primary">rlmF</name>
    <name type="ordered locus">YPK_1596</name>
</gene>
<reference key="1">
    <citation type="submission" date="2008-02" db="EMBL/GenBank/DDBJ databases">
        <title>Complete sequence of Yersinia pseudotuberculosis YPIII.</title>
        <authorList>
            <consortium name="US DOE Joint Genome Institute"/>
            <person name="Copeland A."/>
            <person name="Lucas S."/>
            <person name="Lapidus A."/>
            <person name="Glavina del Rio T."/>
            <person name="Dalin E."/>
            <person name="Tice H."/>
            <person name="Bruce D."/>
            <person name="Goodwin L."/>
            <person name="Pitluck S."/>
            <person name="Munk A.C."/>
            <person name="Brettin T."/>
            <person name="Detter J.C."/>
            <person name="Han C."/>
            <person name="Tapia R."/>
            <person name="Schmutz J."/>
            <person name="Larimer F."/>
            <person name="Land M."/>
            <person name="Hauser L."/>
            <person name="Challacombe J.F."/>
            <person name="Green L."/>
            <person name="Lindler L.E."/>
            <person name="Nikolich M.P."/>
            <person name="Richardson P."/>
        </authorList>
    </citation>
    <scope>NUCLEOTIDE SEQUENCE [LARGE SCALE GENOMIC DNA]</scope>
    <source>
        <strain>YPIII</strain>
    </source>
</reference>
<feature type="chain" id="PRO_0000349989" description="Ribosomal RNA large subunit methyltransferase F">
    <location>
        <begin position="1"/>
        <end position="336"/>
    </location>
</feature>
<evidence type="ECO:0000255" key="1">
    <source>
        <dbReference type="HAMAP-Rule" id="MF_01848"/>
    </source>
</evidence>
<evidence type="ECO:0000305" key="2"/>
<keyword id="KW-0963">Cytoplasm</keyword>
<keyword id="KW-0489">Methyltransferase</keyword>
<keyword id="KW-0698">rRNA processing</keyword>
<keyword id="KW-0949">S-adenosyl-L-methionine</keyword>
<keyword id="KW-0808">Transferase</keyword>
<comment type="function">
    <text evidence="1">Specifically methylates the adenine in position 1618 of 23S rRNA.</text>
</comment>
<comment type="catalytic activity">
    <reaction evidence="1">
        <text>adenosine(1618) in 23S rRNA + S-adenosyl-L-methionine = N(6)-methyladenosine(1618) in 23S rRNA + S-adenosyl-L-homocysteine + H(+)</text>
        <dbReference type="Rhea" id="RHEA:16497"/>
        <dbReference type="Rhea" id="RHEA-COMP:10229"/>
        <dbReference type="Rhea" id="RHEA-COMP:10231"/>
        <dbReference type="ChEBI" id="CHEBI:15378"/>
        <dbReference type="ChEBI" id="CHEBI:57856"/>
        <dbReference type="ChEBI" id="CHEBI:59789"/>
        <dbReference type="ChEBI" id="CHEBI:74411"/>
        <dbReference type="ChEBI" id="CHEBI:74449"/>
        <dbReference type="EC" id="2.1.1.181"/>
    </reaction>
</comment>
<comment type="subcellular location">
    <subcellularLocation>
        <location evidence="1">Cytoplasm</location>
    </subcellularLocation>
</comment>
<comment type="similarity">
    <text evidence="1">Belongs to the methyltransferase superfamily. METTL16/RlmF family.</text>
</comment>
<comment type="sequence caution" evidence="2">
    <conflict type="erroneous initiation">
        <sequence resource="EMBL-CDS" id="ACA67889"/>
    </conflict>
</comment>